<keyword id="KW-0963">Cytoplasm</keyword>
<keyword id="KW-0240">DNA-directed RNA polymerase</keyword>
<keyword id="KW-0548">Nucleotidyltransferase</keyword>
<keyword id="KW-1185">Reference proteome</keyword>
<keyword id="KW-0804">Transcription</keyword>
<keyword id="KW-0808">Transferase</keyword>
<sequence>MERLRIIRESRGSYVIQVYGEDHTLGTLLVEAIKRVSNPKLAYYEAVHPMEDIIQVYVKYEDDVDIKEVLRKASDYLLEVIGDFRRRYLEALERRGGGG</sequence>
<accession>Q9YEZ1</accession>
<comment type="function">
    <text evidence="1">DNA-dependent RNA polymerase (RNAP) catalyzes the transcription of DNA into RNA using the four ribonucleoside triphosphates as substrates.</text>
</comment>
<comment type="catalytic activity">
    <reaction evidence="1">
        <text>RNA(n) + a ribonucleoside 5'-triphosphate = RNA(n+1) + diphosphate</text>
        <dbReference type="Rhea" id="RHEA:21248"/>
        <dbReference type="Rhea" id="RHEA-COMP:14527"/>
        <dbReference type="Rhea" id="RHEA-COMP:17342"/>
        <dbReference type="ChEBI" id="CHEBI:33019"/>
        <dbReference type="ChEBI" id="CHEBI:61557"/>
        <dbReference type="ChEBI" id="CHEBI:140395"/>
        <dbReference type="EC" id="2.7.7.6"/>
    </reaction>
</comment>
<comment type="subunit">
    <text evidence="1">Part of the RNA polymerase complex.</text>
</comment>
<comment type="subcellular location">
    <subcellularLocation>
        <location evidence="1">Cytoplasm</location>
    </subcellularLocation>
</comment>
<comment type="similarity">
    <text evidence="1">Belongs to the archaeal Rpo11/eukaryotic RPB11/RPC19 RNA polymerase subunit family.</text>
</comment>
<gene>
    <name evidence="1" type="primary">rpo11</name>
    <name evidence="1" type="synonym">rpoL</name>
    <name type="ordered locus">APE_0443.1</name>
</gene>
<evidence type="ECO:0000255" key="1">
    <source>
        <dbReference type="HAMAP-Rule" id="MF_00261"/>
    </source>
</evidence>
<reference key="1">
    <citation type="journal article" date="1999" name="DNA Res.">
        <title>Complete genome sequence of an aerobic hyper-thermophilic crenarchaeon, Aeropyrum pernix K1.</title>
        <authorList>
            <person name="Kawarabayasi Y."/>
            <person name="Hino Y."/>
            <person name="Horikawa H."/>
            <person name="Yamazaki S."/>
            <person name="Haikawa Y."/>
            <person name="Jin-no K."/>
            <person name="Takahashi M."/>
            <person name="Sekine M."/>
            <person name="Baba S."/>
            <person name="Ankai A."/>
            <person name="Kosugi H."/>
            <person name="Hosoyama A."/>
            <person name="Fukui S."/>
            <person name="Nagai Y."/>
            <person name="Nishijima K."/>
            <person name="Nakazawa H."/>
            <person name="Takamiya M."/>
            <person name="Masuda S."/>
            <person name="Funahashi T."/>
            <person name="Tanaka T."/>
            <person name="Kudoh Y."/>
            <person name="Yamazaki J."/>
            <person name="Kushida N."/>
            <person name="Oguchi A."/>
            <person name="Aoki K."/>
            <person name="Kubota K."/>
            <person name="Nakamura Y."/>
            <person name="Nomura N."/>
            <person name="Sako Y."/>
            <person name="Kikuchi H."/>
        </authorList>
    </citation>
    <scope>NUCLEOTIDE SEQUENCE [LARGE SCALE GENOMIC DNA]</scope>
    <source>
        <strain>ATCC 700893 / DSM 11879 / JCM 9820 / NBRC 100138 / K1</strain>
    </source>
</reference>
<proteinExistence type="inferred from homology"/>
<organism>
    <name type="scientific">Aeropyrum pernix (strain ATCC 700893 / DSM 11879 / JCM 9820 / NBRC 100138 / K1)</name>
    <dbReference type="NCBI Taxonomy" id="272557"/>
    <lineage>
        <taxon>Archaea</taxon>
        <taxon>Thermoproteota</taxon>
        <taxon>Thermoprotei</taxon>
        <taxon>Desulfurococcales</taxon>
        <taxon>Desulfurococcaceae</taxon>
        <taxon>Aeropyrum</taxon>
    </lineage>
</organism>
<feature type="chain" id="PRO_0000149321" description="DNA-directed RNA polymerase subunit Rpo11">
    <location>
        <begin position="1"/>
        <end position="99"/>
    </location>
</feature>
<protein>
    <recommendedName>
        <fullName evidence="1">DNA-directed RNA polymerase subunit Rpo11</fullName>
        <ecNumber evidence="1">2.7.7.6</ecNumber>
    </recommendedName>
    <alternativeName>
        <fullName evidence="1">DNA-directed RNA polymerase subunit L</fullName>
    </alternativeName>
</protein>
<name>RPO11_AERPE</name>
<dbReference type="EC" id="2.7.7.6" evidence="1"/>
<dbReference type="EMBL" id="BA000002">
    <property type="protein sequence ID" value="BAA79405.2"/>
    <property type="molecule type" value="Genomic_DNA"/>
</dbReference>
<dbReference type="PIR" id="A72739">
    <property type="entry name" value="A72739"/>
</dbReference>
<dbReference type="RefSeq" id="WP_010865749.1">
    <property type="nucleotide sequence ID" value="NC_000854.2"/>
</dbReference>
<dbReference type="SMR" id="Q9YEZ1"/>
<dbReference type="STRING" id="272557.APE_0443.1"/>
<dbReference type="EnsemblBacteria" id="BAA79405">
    <property type="protein sequence ID" value="BAA79405"/>
    <property type="gene ID" value="APE_0443.1"/>
</dbReference>
<dbReference type="GeneID" id="1444631"/>
<dbReference type="KEGG" id="ape:APE_0443.1"/>
<dbReference type="eggNOG" id="arCOG04111">
    <property type="taxonomic scope" value="Archaea"/>
</dbReference>
<dbReference type="Proteomes" id="UP000002518">
    <property type="component" value="Chromosome"/>
</dbReference>
<dbReference type="GO" id="GO:0005737">
    <property type="term" value="C:cytoplasm"/>
    <property type="evidence" value="ECO:0007669"/>
    <property type="project" value="UniProtKB-SubCell"/>
</dbReference>
<dbReference type="GO" id="GO:0000428">
    <property type="term" value="C:DNA-directed RNA polymerase complex"/>
    <property type="evidence" value="ECO:0007669"/>
    <property type="project" value="UniProtKB-KW"/>
</dbReference>
<dbReference type="GO" id="GO:0003677">
    <property type="term" value="F:DNA binding"/>
    <property type="evidence" value="ECO:0007669"/>
    <property type="project" value="InterPro"/>
</dbReference>
<dbReference type="GO" id="GO:0003899">
    <property type="term" value="F:DNA-directed RNA polymerase activity"/>
    <property type="evidence" value="ECO:0007669"/>
    <property type="project" value="UniProtKB-UniRule"/>
</dbReference>
<dbReference type="GO" id="GO:0046983">
    <property type="term" value="F:protein dimerization activity"/>
    <property type="evidence" value="ECO:0007669"/>
    <property type="project" value="InterPro"/>
</dbReference>
<dbReference type="GO" id="GO:0006351">
    <property type="term" value="P:DNA-templated transcription"/>
    <property type="evidence" value="ECO:0007669"/>
    <property type="project" value="UniProtKB-UniRule"/>
</dbReference>
<dbReference type="CDD" id="cd06927">
    <property type="entry name" value="RNAP_L"/>
    <property type="match status" value="1"/>
</dbReference>
<dbReference type="Gene3D" id="3.30.1360.10">
    <property type="entry name" value="RNA polymerase, RBP11-like subunit"/>
    <property type="match status" value="1"/>
</dbReference>
<dbReference type="HAMAP" id="MF_00261">
    <property type="entry name" value="RNApol_arch_Rpo11"/>
    <property type="match status" value="1"/>
</dbReference>
<dbReference type="InterPro" id="IPR036603">
    <property type="entry name" value="RBP11-like"/>
</dbReference>
<dbReference type="InterPro" id="IPR009025">
    <property type="entry name" value="RBP11-like_dimer"/>
</dbReference>
<dbReference type="InterPro" id="IPR008193">
    <property type="entry name" value="RNA_pol_Rpb11_13-16kDa_CS"/>
</dbReference>
<dbReference type="InterPro" id="IPR022905">
    <property type="entry name" value="Rpo11-like"/>
</dbReference>
<dbReference type="Pfam" id="PF13656">
    <property type="entry name" value="RNA_pol_L_2"/>
    <property type="match status" value="1"/>
</dbReference>
<dbReference type="SUPFAM" id="SSF55257">
    <property type="entry name" value="RBP11-like subunits of RNA polymerase"/>
    <property type="match status" value="1"/>
</dbReference>
<dbReference type="PROSITE" id="PS01154">
    <property type="entry name" value="RNA_POL_L_13KD"/>
    <property type="match status" value="1"/>
</dbReference>